<gene>
    <name evidence="1" type="primary">rplR</name>
    <name type="ordered locus">RHECIAT_CH0001765</name>
</gene>
<organism>
    <name type="scientific">Rhizobium etli (strain CIAT 652)</name>
    <dbReference type="NCBI Taxonomy" id="491916"/>
    <lineage>
        <taxon>Bacteria</taxon>
        <taxon>Pseudomonadati</taxon>
        <taxon>Pseudomonadota</taxon>
        <taxon>Alphaproteobacteria</taxon>
        <taxon>Hyphomicrobiales</taxon>
        <taxon>Rhizobiaceae</taxon>
        <taxon>Rhizobium/Agrobacterium group</taxon>
        <taxon>Rhizobium</taxon>
    </lineage>
</organism>
<proteinExistence type="inferred from homology"/>
<dbReference type="EMBL" id="CP001074">
    <property type="protein sequence ID" value="ACE90735.1"/>
    <property type="molecule type" value="Genomic_DNA"/>
</dbReference>
<dbReference type="SMR" id="B3PWT7"/>
<dbReference type="KEGG" id="rec:RHECIAT_CH0001765"/>
<dbReference type="eggNOG" id="COG0256">
    <property type="taxonomic scope" value="Bacteria"/>
</dbReference>
<dbReference type="HOGENOM" id="CLU_098841_0_1_5"/>
<dbReference type="Proteomes" id="UP000008817">
    <property type="component" value="Chromosome"/>
</dbReference>
<dbReference type="GO" id="GO:0022625">
    <property type="term" value="C:cytosolic large ribosomal subunit"/>
    <property type="evidence" value="ECO:0007669"/>
    <property type="project" value="TreeGrafter"/>
</dbReference>
<dbReference type="GO" id="GO:0008097">
    <property type="term" value="F:5S rRNA binding"/>
    <property type="evidence" value="ECO:0007669"/>
    <property type="project" value="TreeGrafter"/>
</dbReference>
<dbReference type="GO" id="GO:0003735">
    <property type="term" value="F:structural constituent of ribosome"/>
    <property type="evidence" value="ECO:0007669"/>
    <property type="project" value="InterPro"/>
</dbReference>
<dbReference type="GO" id="GO:0006412">
    <property type="term" value="P:translation"/>
    <property type="evidence" value="ECO:0007669"/>
    <property type="project" value="UniProtKB-UniRule"/>
</dbReference>
<dbReference type="CDD" id="cd00432">
    <property type="entry name" value="Ribosomal_L18_L5e"/>
    <property type="match status" value="1"/>
</dbReference>
<dbReference type="FunFam" id="3.30.420.100:FF:000001">
    <property type="entry name" value="50S ribosomal protein L18"/>
    <property type="match status" value="1"/>
</dbReference>
<dbReference type="Gene3D" id="3.30.420.100">
    <property type="match status" value="1"/>
</dbReference>
<dbReference type="HAMAP" id="MF_01337_B">
    <property type="entry name" value="Ribosomal_uL18_B"/>
    <property type="match status" value="1"/>
</dbReference>
<dbReference type="InterPro" id="IPR004389">
    <property type="entry name" value="Ribosomal_uL18_bac-type"/>
</dbReference>
<dbReference type="InterPro" id="IPR005484">
    <property type="entry name" value="Ribosomal_uL18_bac/euk"/>
</dbReference>
<dbReference type="NCBIfam" id="TIGR00060">
    <property type="entry name" value="L18_bact"/>
    <property type="match status" value="1"/>
</dbReference>
<dbReference type="PANTHER" id="PTHR12899">
    <property type="entry name" value="39S RIBOSOMAL PROTEIN L18, MITOCHONDRIAL"/>
    <property type="match status" value="1"/>
</dbReference>
<dbReference type="PANTHER" id="PTHR12899:SF3">
    <property type="entry name" value="LARGE RIBOSOMAL SUBUNIT PROTEIN UL18M"/>
    <property type="match status" value="1"/>
</dbReference>
<dbReference type="Pfam" id="PF00861">
    <property type="entry name" value="Ribosomal_L18p"/>
    <property type="match status" value="1"/>
</dbReference>
<dbReference type="SUPFAM" id="SSF53137">
    <property type="entry name" value="Translational machinery components"/>
    <property type="match status" value="1"/>
</dbReference>
<name>RL18_RHIE6</name>
<keyword id="KW-0687">Ribonucleoprotein</keyword>
<keyword id="KW-0689">Ribosomal protein</keyword>
<keyword id="KW-0694">RNA-binding</keyword>
<keyword id="KW-0699">rRNA-binding</keyword>
<accession>B3PWT7</accession>
<sequence length="120" mass="12758">MASRKEALARRANRVRRHIKSVANGRPRLSVHRSSKNIYAQIIDDVAGKTLASASTLEKDLRGSLKTGADTAAAAAVGKLVAERASKAGVSEVVFDRGAFIYHGRIKALAEAAREGGLTF</sequence>
<feature type="chain" id="PRO_1000142707" description="Large ribosomal subunit protein uL18">
    <location>
        <begin position="1"/>
        <end position="120"/>
    </location>
</feature>
<comment type="function">
    <text evidence="1">This is one of the proteins that bind and probably mediate the attachment of the 5S RNA into the large ribosomal subunit, where it forms part of the central protuberance.</text>
</comment>
<comment type="subunit">
    <text evidence="1">Part of the 50S ribosomal subunit; part of the 5S rRNA/L5/L18/L25 subcomplex. Contacts the 5S and 23S rRNAs.</text>
</comment>
<comment type="similarity">
    <text evidence="1">Belongs to the universal ribosomal protein uL18 family.</text>
</comment>
<evidence type="ECO:0000255" key="1">
    <source>
        <dbReference type="HAMAP-Rule" id="MF_01337"/>
    </source>
</evidence>
<evidence type="ECO:0000305" key="2"/>
<protein>
    <recommendedName>
        <fullName evidence="1">Large ribosomal subunit protein uL18</fullName>
    </recommendedName>
    <alternativeName>
        <fullName evidence="2">50S ribosomal protein L18</fullName>
    </alternativeName>
</protein>
<reference key="1">
    <citation type="journal article" date="2010" name="Appl. Environ. Microbiol.">
        <title>Conserved symbiotic plasmid DNA sequences in the multireplicon pangenomic structure of Rhizobium etli.</title>
        <authorList>
            <person name="Gonzalez V."/>
            <person name="Acosta J.L."/>
            <person name="Santamaria R.I."/>
            <person name="Bustos P."/>
            <person name="Fernandez J.L."/>
            <person name="Hernandez Gonzalez I.L."/>
            <person name="Diaz R."/>
            <person name="Flores M."/>
            <person name="Palacios R."/>
            <person name="Mora J."/>
            <person name="Davila G."/>
        </authorList>
    </citation>
    <scope>NUCLEOTIDE SEQUENCE [LARGE SCALE GENOMIC DNA]</scope>
    <source>
        <strain>CIAT 652</strain>
    </source>
</reference>